<sequence>MAQKPLSTTAAERMNLVAQDEIWKYRLRAESEARQNWPAKWGYLTTSMKELLEGEEEPQTPKPKPELPSHFYVRPVSPMDKHIKILPSPPVPKTTQGFIGWRSGKPALYCLEKYSEVCSCKGAYARELCWPEQGVH</sequence>
<reference key="1">
    <citation type="journal article" date="2005" name="Science">
        <title>The transcriptional landscape of the mammalian genome.</title>
        <authorList>
            <person name="Carninci P."/>
            <person name="Kasukawa T."/>
            <person name="Katayama S."/>
            <person name="Gough J."/>
            <person name="Frith M.C."/>
            <person name="Maeda N."/>
            <person name="Oyama R."/>
            <person name="Ravasi T."/>
            <person name="Lenhard B."/>
            <person name="Wells C."/>
            <person name="Kodzius R."/>
            <person name="Shimokawa K."/>
            <person name="Bajic V.B."/>
            <person name="Brenner S.E."/>
            <person name="Batalov S."/>
            <person name="Forrest A.R."/>
            <person name="Zavolan M."/>
            <person name="Davis M.J."/>
            <person name="Wilming L.G."/>
            <person name="Aidinis V."/>
            <person name="Allen J.E."/>
            <person name="Ambesi-Impiombato A."/>
            <person name="Apweiler R."/>
            <person name="Aturaliya R.N."/>
            <person name="Bailey T.L."/>
            <person name="Bansal M."/>
            <person name="Baxter L."/>
            <person name="Beisel K.W."/>
            <person name="Bersano T."/>
            <person name="Bono H."/>
            <person name="Chalk A.M."/>
            <person name="Chiu K.P."/>
            <person name="Choudhary V."/>
            <person name="Christoffels A."/>
            <person name="Clutterbuck D.R."/>
            <person name="Crowe M.L."/>
            <person name="Dalla E."/>
            <person name="Dalrymple B.P."/>
            <person name="de Bono B."/>
            <person name="Della Gatta G."/>
            <person name="di Bernardo D."/>
            <person name="Down T."/>
            <person name="Engstrom P."/>
            <person name="Fagiolini M."/>
            <person name="Faulkner G."/>
            <person name="Fletcher C.F."/>
            <person name="Fukushima T."/>
            <person name="Furuno M."/>
            <person name="Futaki S."/>
            <person name="Gariboldi M."/>
            <person name="Georgii-Hemming P."/>
            <person name="Gingeras T.R."/>
            <person name="Gojobori T."/>
            <person name="Green R.E."/>
            <person name="Gustincich S."/>
            <person name="Harbers M."/>
            <person name="Hayashi Y."/>
            <person name="Hensch T.K."/>
            <person name="Hirokawa N."/>
            <person name="Hill D."/>
            <person name="Huminiecki L."/>
            <person name="Iacono M."/>
            <person name="Ikeo K."/>
            <person name="Iwama A."/>
            <person name="Ishikawa T."/>
            <person name="Jakt M."/>
            <person name="Kanapin A."/>
            <person name="Katoh M."/>
            <person name="Kawasawa Y."/>
            <person name="Kelso J."/>
            <person name="Kitamura H."/>
            <person name="Kitano H."/>
            <person name="Kollias G."/>
            <person name="Krishnan S.P."/>
            <person name="Kruger A."/>
            <person name="Kummerfeld S.K."/>
            <person name="Kurochkin I.V."/>
            <person name="Lareau L.F."/>
            <person name="Lazarevic D."/>
            <person name="Lipovich L."/>
            <person name="Liu J."/>
            <person name="Liuni S."/>
            <person name="McWilliam S."/>
            <person name="Madan Babu M."/>
            <person name="Madera M."/>
            <person name="Marchionni L."/>
            <person name="Matsuda H."/>
            <person name="Matsuzawa S."/>
            <person name="Miki H."/>
            <person name="Mignone F."/>
            <person name="Miyake S."/>
            <person name="Morris K."/>
            <person name="Mottagui-Tabar S."/>
            <person name="Mulder N."/>
            <person name="Nakano N."/>
            <person name="Nakauchi H."/>
            <person name="Ng P."/>
            <person name="Nilsson R."/>
            <person name="Nishiguchi S."/>
            <person name="Nishikawa S."/>
            <person name="Nori F."/>
            <person name="Ohara O."/>
            <person name="Okazaki Y."/>
            <person name="Orlando V."/>
            <person name="Pang K.C."/>
            <person name="Pavan W.J."/>
            <person name="Pavesi G."/>
            <person name="Pesole G."/>
            <person name="Petrovsky N."/>
            <person name="Piazza S."/>
            <person name="Reed J."/>
            <person name="Reid J.F."/>
            <person name="Ring B.Z."/>
            <person name="Ringwald M."/>
            <person name="Rost B."/>
            <person name="Ruan Y."/>
            <person name="Salzberg S.L."/>
            <person name="Sandelin A."/>
            <person name="Schneider C."/>
            <person name="Schoenbach C."/>
            <person name="Sekiguchi K."/>
            <person name="Semple C.A."/>
            <person name="Seno S."/>
            <person name="Sessa L."/>
            <person name="Sheng Y."/>
            <person name="Shibata Y."/>
            <person name="Shimada H."/>
            <person name="Shimada K."/>
            <person name="Silva D."/>
            <person name="Sinclair B."/>
            <person name="Sperling S."/>
            <person name="Stupka E."/>
            <person name="Sugiura K."/>
            <person name="Sultana R."/>
            <person name="Takenaka Y."/>
            <person name="Taki K."/>
            <person name="Tammoja K."/>
            <person name="Tan S.L."/>
            <person name="Tang S."/>
            <person name="Taylor M.S."/>
            <person name="Tegner J."/>
            <person name="Teichmann S.A."/>
            <person name="Ueda H.R."/>
            <person name="van Nimwegen E."/>
            <person name="Verardo R."/>
            <person name="Wei C.L."/>
            <person name="Yagi K."/>
            <person name="Yamanishi H."/>
            <person name="Zabarovsky E."/>
            <person name="Zhu S."/>
            <person name="Zimmer A."/>
            <person name="Hide W."/>
            <person name="Bult C."/>
            <person name="Grimmond S.M."/>
            <person name="Teasdale R.D."/>
            <person name="Liu E.T."/>
            <person name="Brusic V."/>
            <person name="Quackenbush J."/>
            <person name="Wahlestedt C."/>
            <person name="Mattick J.S."/>
            <person name="Hume D.A."/>
            <person name="Kai C."/>
            <person name="Sasaki D."/>
            <person name="Tomaru Y."/>
            <person name="Fukuda S."/>
            <person name="Kanamori-Katayama M."/>
            <person name="Suzuki M."/>
            <person name="Aoki J."/>
            <person name="Arakawa T."/>
            <person name="Iida J."/>
            <person name="Imamura K."/>
            <person name="Itoh M."/>
            <person name="Kato T."/>
            <person name="Kawaji H."/>
            <person name="Kawagashira N."/>
            <person name="Kawashima T."/>
            <person name="Kojima M."/>
            <person name="Kondo S."/>
            <person name="Konno H."/>
            <person name="Nakano K."/>
            <person name="Ninomiya N."/>
            <person name="Nishio T."/>
            <person name="Okada M."/>
            <person name="Plessy C."/>
            <person name="Shibata K."/>
            <person name="Shiraki T."/>
            <person name="Suzuki S."/>
            <person name="Tagami M."/>
            <person name="Waki K."/>
            <person name="Watahiki A."/>
            <person name="Okamura-Oho Y."/>
            <person name="Suzuki H."/>
            <person name="Kawai J."/>
            <person name="Hayashizaki Y."/>
        </authorList>
    </citation>
    <scope>NUCLEOTIDE SEQUENCE [LARGE SCALE MRNA]</scope>
    <source>
        <strain>C57BL/6J</strain>
        <tissue>Testis</tissue>
    </source>
</reference>
<reference key="2">
    <citation type="journal article" date="2009" name="PLoS Biol.">
        <title>Lineage-specific biology revealed by a finished genome assembly of the mouse.</title>
        <authorList>
            <person name="Church D.M."/>
            <person name="Goodstadt L."/>
            <person name="Hillier L.W."/>
            <person name="Zody M.C."/>
            <person name="Goldstein S."/>
            <person name="She X."/>
            <person name="Bult C.J."/>
            <person name="Agarwala R."/>
            <person name="Cherry J.L."/>
            <person name="DiCuccio M."/>
            <person name="Hlavina W."/>
            <person name="Kapustin Y."/>
            <person name="Meric P."/>
            <person name="Maglott D."/>
            <person name="Birtle Z."/>
            <person name="Marques A.C."/>
            <person name="Graves T."/>
            <person name="Zhou S."/>
            <person name="Teague B."/>
            <person name="Potamousis K."/>
            <person name="Churas C."/>
            <person name="Place M."/>
            <person name="Herschleb J."/>
            <person name="Runnheim R."/>
            <person name="Forrest D."/>
            <person name="Amos-Landgraf J."/>
            <person name="Schwartz D.C."/>
            <person name="Cheng Z."/>
            <person name="Lindblad-Toh K."/>
            <person name="Eichler E.E."/>
            <person name="Ponting C.P."/>
        </authorList>
    </citation>
    <scope>NUCLEOTIDE SEQUENCE [LARGE SCALE GENOMIC DNA]</scope>
    <source>
        <strain>C57BL/6J</strain>
    </source>
</reference>
<reference key="3">
    <citation type="journal article" date="2004" name="Genome Res.">
        <title>The status, quality, and expansion of the NIH full-length cDNA project: the Mammalian Gene Collection (MGC).</title>
        <authorList>
            <consortium name="The MGC Project Team"/>
        </authorList>
    </citation>
    <scope>NUCLEOTIDE SEQUENCE [LARGE SCALE MRNA]</scope>
    <source>
        <tissue>Testis</tissue>
    </source>
</reference>
<accession>Q9DA42</accession>
<accession>Q80YT4</accession>
<name>CMIP1_MOUSE</name>
<gene>
    <name type="primary">Cimip1</name>
</gene>
<dbReference type="EMBL" id="AK006200">
    <property type="protein sequence ID" value="BAB24455.1"/>
    <property type="molecule type" value="mRNA"/>
</dbReference>
<dbReference type="EMBL" id="AL807384">
    <property type="status" value="NOT_ANNOTATED_CDS"/>
    <property type="molecule type" value="Genomic_DNA"/>
</dbReference>
<dbReference type="EMBL" id="BC050790">
    <property type="protein sequence ID" value="AAH50790.1"/>
    <property type="molecule type" value="mRNA"/>
</dbReference>
<dbReference type="CCDS" id="CCDS50814.1"/>
<dbReference type="RefSeq" id="NP_082434.1">
    <property type="nucleotide sequence ID" value="NM_028158.1"/>
</dbReference>
<dbReference type="SMR" id="Q9DA42"/>
<dbReference type="BioGRID" id="215228">
    <property type="interactions" value="1"/>
</dbReference>
<dbReference type="FunCoup" id="Q9DA42">
    <property type="interactions" value="10"/>
</dbReference>
<dbReference type="STRING" id="10090.ENSMUSP00000029023"/>
<dbReference type="PhosphoSitePlus" id="Q9DA42"/>
<dbReference type="SwissPalm" id="Q9DA42"/>
<dbReference type="PaxDb" id="10090-ENSMUSP00000029023"/>
<dbReference type="Antibodypedia" id="70475">
    <property type="antibodies" value="11 antibodies from 4 providers"/>
</dbReference>
<dbReference type="Ensembl" id="ENSMUST00000029023.4">
    <property type="protein sequence ID" value="ENSMUSP00000029023.4"/>
    <property type="gene ID" value="ENSMUSG00000027518.4"/>
</dbReference>
<dbReference type="GeneID" id="72221"/>
<dbReference type="KEGG" id="mmu:72221"/>
<dbReference type="UCSC" id="uc008odt.2">
    <property type="organism name" value="mouse"/>
</dbReference>
<dbReference type="AGR" id="MGI:1919471"/>
<dbReference type="CTD" id="128602"/>
<dbReference type="MGI" id="MGI:1919471">
    <property type="gene designation" value="Cimip1"/>
</dbReference>
<dbReference type="VEuPathDB" id="HostDB:ENSMUSG00000027518"/>
<dbReference type="eggNOG" id="ENOG502S4TU">
    <property type="taxonomic scope" value="Eukaryota"/>
</dbReference>
<dbReference type="GeneTree" id="ENSGT00940000154459"/>
<dbReference type="HOGENOM" id="CLU_125517_0_0_1"/>
<dbReference type="InParanoid" id="Q9DA42"/>
<dbReference type="OMA" id="QIWKDHI"/>
<dbReference type="OrthoDB" id="10031946at2759"/>
<dbReference type="PhylomeDB" id="Q9DA42"/>
<dbReference type="TreeFam" id="TF329228"/>
<dbReference type="BioGRID-ORCS" id="72221">
    <property type="hits" value="0 hits in 76 CRISPR screens"/>
</dbReference>
<dbReference type="PRO" id="PR:Q9DA42"/>
<dbReference type="Proteomes" id="UP000000589">
    <property type="component" value="Chromosome 2"/>
</dbReference>
<dbReference type="RNAct" id="Q9DA42">
    <property type="molecule type" value="protein"/>
</dbReference>
<dbReference type="Bgee" id="ENSMUSG00000027518">
    <property type="expression patterns" value="Expressed in seminiferous tubule of testis and 17 other cell types or tissues"/>
</dbReference>
<dbReference type="GO" id="GO:0005929">
    <property type="term" value="C:cilium"/>
    <property type="evidence" value="ECO:0000250"/>
    <property type="project" value="UniProtKB"/>
</dbReference>
<dbReference type="InterPro" id="IPR020339">
    <property type="entry name" value="C20orf85-like"/>
</dbReference>
<dbReference type="PANTHER" id="PTHR31909">
    <property type="entry name" value="CHROMOSOME 20 ORF85 FAMILY MEMBER"/>
    <property type="match status" value="1"/>
</dbReference>
<dbReference type="PANTHER" id="PTHR31909:SF3">
    <property type="entry name" value="SIMILAR TO PROTEIN C20ORF85 HOMOLOG"/>
    <property type="match status" value="1"/>
</dbReference>
<dbReference type="Pfam" id="PF14945">
    <property type="entry name" value="LLC1"/>
    <property type="match status" value="1"/>
</dbReference>
<feature type="chain" id="PRO_0000079449" description="Ciliary microtubule inner protein 1">
    <location>
        <begin position="1"/>
        <end position="136"/>
    </location>
</feature>
<feature type="sequence conflict" description="In Ref. 1; BAB24455." evidence="2" ref="1">
    <original>LS</original>
    <variation>IN</variation>
    <location>
        <begin position="6"/>
        <end position="7"/>
    </location>
</feature>
<feature type="sequence conflict" description="In Ref. 1; BAB24455." evidence="2" ref="1">
    <original>E</original>
    <variation>K</variation>
    <location>
        <position position="12"/>
    </location>
</feature>
<feature type="sequence conflict" description="In Ref. 1; BAB24455." evidence="2" ref="1">
    <original>L</original>
    <variation>F</variation>
    <location>
        <position position="16"/>
    </location>
</feature>
<feature type="sequence conflict" description="In Ref. 1; BAB24455." evidence="2" ref="1">
    <original>Q</original>
    <variation>L</variation>
    <location>
        <position position="19"/>
    </location>
</feature>
<proteinExistence type="evidence at transcript level"/>
<protein>
    <recommendedName>
        <fullName>Ciliary microtubule inner protein 1</fullName>
    </recommendedName>
    <alternativeName>
        <fullName>Uncharacterized protein C20orf85 homolog</fullName>
    </alternativeName>
</protein>
<evidence type="ECO:0000250" key="1">
    <source>
        <dbReference type="UniProtKB" id="Q9H1P6"/>
    </source>
</evidence>
<evidence type="ECO:0000305" key="2"/>
<keyword id="KW-0966">Cell projection</keyword>
<keyword id="KW-1185">Reference proteome</keyword>
<organism>
    <name type="scientific">Mus musculus</name>
    <name type="common">Mouse</name>
    <dbReference type="NCBI Taxonomy" id="10090"/>
    <lineage>
        <taxon>Eukaryota</taxon>
        <taxon>Metazoa</taxon>
        <taxon>Chordata</taxon>
        <taxon>Craniata</taxon>
        <taxon>Vertebrata</taxon>
        <taxon>Euteleostomi</taxon>
        <taxon>Mammalia</taxon>
        <taxon>Eutheria</taxon>
        <taxon>Euarchontoglires</taxon>
        <taxon>Glires</taxon>
        <taxon>Rodentia</taxon>
        <taxon>Myomorpha</taxon>
        <taxon>Muroidea</taxon>
        <taxon>Muridae</taxon>
        <taxon>Murinae</taxon>
        <taxon>Mus</taxon>
        <taxon>Mus</taxon>
    </lineage>
</organism>
<comment type="subcellular location">
    <subcellularLocation>
        <location evidence="1">Cell projection</location>
        <location evidence="1">Cilium</location>
    </subcellularLocation>
</comment>